<dbReference type="EMBL" id="AK011097">
    <property type="protein sequence ID" value="BAB27394.1"/>
    <property type="molecule type" value="mRNA"/>
</dbReference>
<dbReference type="EMBL" id="AK147134">
    <property type="protein sequence ID" value="BAE27704.1"/>
    <property type="molecule type" value="mRNA"/>
</dbReference>
<dbReference type="EMBL" id="AL773533">
    <property type="status" value="NOT_ANNOTATED_CDS"/>
    <property type="molecule type" value="Genomic_DNA"/>
</dbReference>
<dbReference type="CCDS" id="CCDS38150.1"/>
<dbReference type="RefSeq" id="NP_082511.1">
    <property type="nucleotide sequence ID" value="NM_028235.1"/>
</dbReference>
<dbReference type="SMR" id="Q9CY00"/>
<dbReference type="BioGRID" id="215366">
    <property type="interactions" value="1"/>
</dbReference>
<dbReference type="ComplexPortal" id="CPX-5028">
    <property type="entry name" value="Intraflagellar transport complex B"/>
</dbReference>
<dbReference type="FunCoup" id="Q9CY00">
    <property type="interactions" value="259"/>
</dbReference>
<dbReference type="IntAct" id="Q9CY00">
    <property type="interactions" value="1"/>
</dbReference>
<dbReference type="MINT" id="Q9CY00"/>
<dbReference type="STRING" id="10090.ENSMUSP00000097576"/>
<dbReference type="iPTMnet" id="Q9CY00"/>
<dbReference type="PhosphoSitePlus" id="Q9CY00"/>
<dbReference type="jPOST" id="Q9CY00"/>
<dbReference type="PaxDb" id="10090-ENSMUSP00000097576"/>
<dbReference type="ProteomicsDB" id="300146"/>
<dbReference type="Pumba" id="Q9CY00"/>
<dbReference type="Ensembl" id="ENSMUST00000099996.5">
    <property type="protein sequence ID" value="ENSMUSP00000097576.4"/>
    <property type="gene ID" value="ENSMUSG00000075273.5"/>
</dbReference>
<dbReference type="GeneID" id="72421"/>
<dbReference type="KEGG" id="mmu:72421"/>
<dbReference type="UCSC" id="uc008keu.1">
    <property type="organism name" value="mouse"/>
</dbReference>
<dbReference type="AGR" id="MGI:1919671"/>
<dbReference type="CTD" id="150737"/>
<dbReference type="MGI" id="MGI:1919671">
    <property type="gene designation" value="Ift70b"/>
</dbReference>
<dbReference type="VEuPathDB" id="HostDB:ENSMUSG00000075273"/>
<dbReference type="eggNOG" id="KOG4340">
    <property type="taxonomic scope" value="Eukaryota"/>
</dbReference>
<dbReference type="GeneTree" id="ENSGT00390000010116"/>
<dbReference type="HOGENOM" id="CLU_023760_0_0_1"/>
<dbReference type="InParanoid" id="Q9CY00"/>
<dbReference type="OMA" id="LEPCNKK"/>
<dbReference type="OrthoDB" id="10249577at2759"/>
<dbReference type="PhylomeDB" id="Q9CY00"/>
<dbReference type="TreeFam" id="TF314592"/>
<dbReference type="Reactome" id="R-MMU-5620924">
    <property type="pathway name" value="Intraflagellar transport"/>
</dbReference>
<dbReference type="BioGRID-ORCS" id="72421">
    <property type="hits" value="3 hits in 77 CRISPR screens"/>
</dbReference>
<dbReference type="ChiTaRS" id="Ttc30b">
    <property type="organism name" value="mouse"/>
</dbReference>
<dbReference type="PRO" id="PR:Q9CY00"/>
<dbReference type="Proteomes" id="UP000000589">
    <property type="component" value="Chromosome 2"/>
</dbReference>
<dbReference type="RNAct" id="Q9CY00">
    <property type="molecule type" value="protein"/>
</dbReference>
<dbReference type="Bgee" id="ENSMUSG00000075273">
    <property type="expression patterns" value="Expressed in olfactory epithelium and 254 other cell types or tissues"/>
</dbReference>
<dbReference type="ExpressionAtlas" id="Q9CY00">
    <property type="expression patterns" value="baseline and differential"/>
</dbReference>
<dbReference type="GO" id="GO:0036064">
    <property type="term" value="C:ciliary basal body"/>
    <property type="evidence" value="ECO:0000266"/>
    <property type="project" value="MGI"/>
</dbReference>
<dbReference type="GO" id="GO:0005929">
    <property type="term" value="C:cilium"/>
    <property type="evidence" value="ECO:0000303"/>
    <property type="project" value="ComplexPortal"/>
</dbReference>
<dbReference type="GO" id="GO:0030992">
    <property type="term" value="C:intraciliary transport particle B"/>
    <property type="evidence" value="ECO:0000314"/>
    <property type="project" value="MGI"/>
</dbReference>
<dbReference type="GO" id="GO:0060271">
    <property type="term" value="P:cilium assembly"/>
    <property type="evidence" value="ECO:0000303"/>
    <property type="project" value="ComplexPortal"/>
</dbReference>
<dbReference type="GO" id="GO:0035720">
    <property type="term" value="P:intraciliary anterograde transport"/>
    <property type="evidence" value="ECO:0000303"/>
    <property type="project" value="ComplexPortal"/>
</dbReference>
<dbReference type="GO" id="GO:0042073">
    <property type="term" value="P:intraciliary transport"/>
    <property type="evidence" value="ECO:0000305"/>
    <property type="project" value="MGI"/>
</dbReference>
<dbReference type="FunFam" id="1.25.40.10:FF:000226">
    <property type="entry name" value="Tetratricopeptide repeat protein 30A"/>
    <property type="match status" value="1"/>
</dbReference>
<dbReference type="FunFam" id="1.25.40.10:FF:000211">
    <property type="entry name" value="tetratricopeptide repeat protein 30B"/>
    <property type="match status" value="1"/>
</dbReference>
<dbReference type="Gene3D" id="1.25.40.10">
    <property type="entry name" value="Tetratricopeptide repeat domain"/>
    <property type="match status" value="3"/>
</dbReference>
<dbReference type="InterPro" id="IPR011990">
    <property type="entry name" value="TPR-like_helical_dom_sf"/>
</dbReference>
<dbReference type="InterPro" id="IPR019734">
    <property type="entry name" value="TPR_rpt"/>
</dbReference>
<dbReference type="InterPro" id="IPR039941">
    <property type="entry name" value="TT30"/>
</dbReference>
<dbReference type="PANTHER" id="PTHR20931:SF7">
    <property type="entry name" value="INTRAFLAGELLAR TRANSPORT PROTEIN 70B"/>
    <property type="match status" value="1"/>
</dbReference>
<dbReference type="PANTHER" id="PTHR20931">
    <property type="entry name" value="TETRATRICOPEPTIDE REPEAT PROTEIN 30"/>
    <property type="match status" value="1"/>
</dbReference>
<dbReference type="SMART" id="SM00028">
    <property type="entry name" value="TPR"/>
    <property type="match status" value="4"/>
</dbReference>
<dbReference type="SUPFAM" id="SSF48452">
    <property type="entry name" value="TPR-like"/>
    <property type="match status" value="3"/>
</dbReference>
<dbReference type="PROSITE" id="PS50293">
    <property type="entry name" value="TPR_REGION"/>
    <property type="match status" value="2"/>
</dbReference>
<comment type="function">
    <text evidence="1">Required for polyglutamylation of axonemal tubulin. Plays a role in anterograde intraflagellar transport (IFT), the process by which cilia precursors are transported from the base of the cilium to the site of their incorporation at the tip.</text>
</comment>
<comment type="subunit">
    <text evidence="3">Interacts with the IFT B complex components IFT27, IFT46, IFT74, IFT52, IFT57, IFT80, IFT81 and IFT88 (PubMed:23810713). Interacts with KIF17 (PubMed:23810713).</text>
</comment>
<comment type="subcellular location">
    <subcellularLocation>
        <location evidence="1">Cell projection</location>
        <location evidence="1">Cilium</location>
    </subcellularLocation>
</comment>
<comment type="similarity">
    <text evidence="4">Belongs to the TTC30/dfy-1/fleer family.</text>
</comment>
<keyword id="KW-0966">Cell projection</keyword>
<keyword id="KW-0969">Cilium</keyword>
<keyword id="KW-0970">Cilium biogenesis/degradation</keyword>
<keyword id="KW-0175">Coiled coil</keyword>
<keyword id="KW-1185">Reference proteome</keyword>
<keyword id="KW-0677">Repeat</keyword>
<keyword id="KW-0802">TPR repeat</keyword>
<reference key="1">
    <citation type="journal article" date="2005" name="Science">
        <title>The transcriptional landscape of the mammalian genome.</title>
        <authorList>
            <person name="Carninci P."/>
            <person name="Kasukawa T."/>
            <person name="Katayama S."/>
            <person name="Gough J."/>
            <person name="Frith M.C."/>
            <person name="Maeda N."/>
            <person name="Oyama R."/>
            <person name="Ravasi T."/>
            <person name="Lenhard B."/>
            <person name="Wells C."/>
            <person name="Kodzius R."/>
            <person name="Shimokawa K."/>
            <person name="Bajic V.B."/>
            <person name="Brenner S.E."/>
            <person name="Batalov S."/>
            <person name="Forrest A.R."/>
            <person name="Zavolan M."/>
            <person name="Davis M.J."/>
            <person name="Wilming L.G."/>
            <person name="Aidinis V."/>
            <person name="Allen J.E."/>
            <person name="Ambesi-Impiombato A."/>
            <person name="Apweiler R."/>
            <person name="Aturaliya R.N."/>
            <person name="Bailey T.L."/>
            <person name="Bansal M."/>
            <person name="Baxter L."/>
            <person name="Beisel K.W."/>
            <person name="Bersano T."/>
            <person name="Bono H."/>
            <person name="Chalk A.M."/>
            <person name="Chiu K.P."/>
            <person name="Choudhary V."/>
            <person name="Christoffels A."/>
            <person name="Clutterbuck D.R."/>
            <person name="Crowe M.L."/>
            <person name="Dalla E."/>
            <person name="Dalrymple B.P."/>
            <person name="de Bono B."/>
            <person name="Della Gatta G."/>
            <person name="di Bernardo D."/>
            <person name="Down T."/>
            <person name="Engstrom P."/>
            <person name="Fagiolini M."/>
            <person name="Faulkner G."/>
            <person name="Fletcher C.F."/>
            <person name="Fukushima T."/>
            <person name="Furuno M."/>
            <person name="Futaki S."/>
            <person name="Gariboldi M."/>
            <person name="Georgii-Hemming P."/>
            <person name="Gingeras T.R."/>
            <person name="Gojobori T."/>
            <person name="Green R.E."/>
            <person name="Gustincich S."/>
            <person name="Harbers M."/>
            <person name="Hayashi Y."/>
            <person name="Hensch T.K."/>
            <person name="Hirokawa N."/>
            <person name="Hill D."/>
            <person name="Huminiecki L."/>
            <person name="Iacono M."/>
            <person name="Ikeo K."/>
            <person name="Iwama A."/>
            <person name="Ishikawa T."/>
            <person name="Jakt M."/>
            <person name="Kanapin A."/>
            <person name="Katoh M."/>
            <person name="Kawasawa Y."/>
            <person name="Kelso J."/>
            <person name="Kitamura H."/>
            <person name="Kitano H."/>
            <person name="Kollias G."/>
            <person name="Krishnan S.P."/>
            <person name="Kruger A."/>
            <person name="Kummerfeld S.K."/>
            <person name="Kurochkin I.V."/>
            <person name="Lareau L.F."/>
            <person name="Lazarevic D."/>
            <person name="Lipovich L."/>
            <person name="Liu J."/>
            <person name="Liuni S."/>
            <person name="McWilliam S."/>
            <person name="Madan Babu M."/>
            <person name="Madera M."/>
            <person name="Marchionni L."/>
            <person name="Matsuda H."/>
            <person name="Matsuzawa S."/>
            <person name="Miki H."/>
            <person name="Mignone F."/>
            <person name="Miyake S."/>
            <person name="Morris K."/>
            <person name="Mottagui-Tabar S."/>
            <person name="Mulder N."/>
            <person name="Nakano N."/>
            <person name="Nakauchi H."/>
            <person name="Ng P."/>
            <person name="Nilsson R."/>
            <person name="Nishiguchi S."/>
            <person name="Nishikawa S."/>
            <person name="Nori F."/>
            <person name="Ohara O."/>
            <person name="Okazaki Y."/>
            <person name="Orlando V."/>
            <person name="Pang K.C."/>
            <person name="Pavan W.J."/>
            <person name="Pavesi G."/>
            <person name="Pesole G."/>
            <person name="Petrovsky N."/>
            <person name="Piazza S."/>
            <person name="Reed J."/>
            <person name="Reid J.F."/>
            <person name="Ring B.Z."/>
            <person name="Ringwald M."/>
            <person name="Rost B."/>
            <person name="Ruan Y."/>
            <person name="Salzberg S.L."/>
            <person name="Sandelin A."/>
            <person name="Schneider C."/>
            <person name="Schoenbach C."/>
            <person name="Sekiguchi K."/>
            <person name="Semple C.A."/>
            <person name="Seno S."/>
            <person name="Sessa L."/>
            <person name="Sheng Y."/>
            <person name="Shibata Y."/>
            <person name="Shimada H."/>
            <person name="Shimada K."/>
            <person name="Silva D."/>
            <person name="Sinclair B."/>
            <person name="Sperling S."/>
            <person name="Stupka E."/>
            <person name="Sugiura K."/>
            <person name="Sultana R."/>
            <person name="Takenaka Y."/>
            <person name="Taki K."/>
            <person name="Tammoja K."/>
            <person name="Tan S.L."/>
            <person name="Tang S."/>
            <person name="Taylor M.S."/>
            <person name="Tegner J."/>
            <person name="Teichmann S.A."/>
            <person name="Ueda H.R."/>
            <person name="van Nimwegen E."/>
            <person name="Verardo R."/>
            <person name="Wei C.L."/>
            <person name="Yagi K."/>
            <person name="Yamanishi H."/>
            <person name="Zabarovsky E."/>
            <person name="Zhu S."/>
            <person name="Zimmer A."/>
            <person name="Hide W."/>
            <person name="Bult C."/>
            <person name="Grimmond S.M."/>
            <person name="Teasdale R.D."/>
            <person name="Liu E.T."/>
            <person name="Brusic V."/>
            <person name="Quackenbush J."/>
            <person name="Wahlestedt C."/>
            <person name="Mattick J.S."/>
            <person name="Hume D.A."/>
            <person name="Kai C."/>
            <person name="Sasaki D."/>
            <person name="Tomaru Y."/>
            <person name="Fukuda S."/>
            <person name="Kanamori-Katayama M."/>
            <person name="Suzuki M."/>
            <person name="Aoki J."/>
            <person name="Arakawa T."/>
            <person name="Iida J."/>
            <person name="Imamura K."/>
            <person name="Itoh M."/>
            <person name="Kato T."/>
            <person name="Kawaji H."/>
            <person name="Kawagashira N."/>
            <person name="Kawashima T."/>
            <person name="Kojima M."/>
            <person name="Kondo S."/>
            <person name="Konno H."/>
            <person name="Nakano K."/>
            <person name="Ninomiya N."/>
            <person name="Nishio T."/>
            <person name="Okada M."/>
            <person name="Plessy C."/>
            <person name="Shibata K."/>
            <person name="Shiraki T."/>
            <person name="Suzuki S."/>
            <person name="Tagami M."/>
            <person name="Waki K."/>
            <person name="Watahiki A."/>
            <person name="Okamura-Oho Y."/>
            <person name="Suzuki H."/>
            <person name="Kawai J."/>
            <person name="Hayashizaki Y."/>
        </authorList>
    </citation>
    <scope>NUCLEOTIDE SEQUENCE [LARGE SCALE MRNA]</scope>
    <source>
        <strain>C57BL/6J</strain>
        <tissue>Kidney</tissue>
        <tissue>Liver</tissue>
    </source>
</reference>
<reference key="2">
    <citation type="journal article" date="2009" name="PLoS Biol.">
        <title>Lineage-specific biology revealed by a finished genome assembly of the mouse.</title>
        <authorList>
            <person name="Church D.M."/>
            <person name="Goodstadt L."/>
            <person name="Hillier L.W."/>
            <person name="Zody M.C."/>
            <person name="Goldstein S."/>
            <person name="She X."/>
            <person name="Bult C.J."/>
            <person name="Agarwala R."/>
            <person name="Cherry J.L."/>
            <person name="DiCuccio M."/>
            <person name="Hlavina W."/>
            <person name="Kapustin Y."/>
            <person name="Meric P."/>
            <person name="Maglott D."/>
            <person name="Birtle Z."/>
            <person name="Marques A.C."/>
            <person name="Graves T."/>
            <person name="Zhou S."/>
            <person name="Teague B."/>
            <person name="Potamousis K."/>
            <person name="Churas C."/>
            <person name="Place M."/>
            <person name="Herschleb J."/>
            <person name="Runnheim R."/>
            <person name="Forrest D."/>
            <person name="Amos-Landgraf J."/>
            <person name="Schwartz D.C."/>
            <person name="Cheng Z."/>
            <person name="Lindblad-Toh K."/>
            <person name="Eichler E.E."/>
            <person name="Ponting C.P."/>
        </authorList>
    </citation>
    <scope>NUCLEOTIDE SEQUENCE [LARGE SCALE GENOMIC DNA]</scope>
    <source>
        <strain>C57BL/6J</strain>
    </source>
</reference>
<reference key="3">
    <citation type="journal article" date="2013" name="Exp. Cell Res.">
        <title>Interaction of mouse TTC30/DYF-1 with multiple intraflagellar transport complex B proteins and KIF17.</title>
        <authorList>
            <person name="Howard P.W."/>
            <person name="Jue S.F."/>
            <person name="Maurer R.A."/>
        </authorList>
    </citation>
    <scope>INTERACTION WITH IFT27; IFT46; IFT74; IFT52; IFT57; IFT80; IFT81; IFT88 AND KIF17</scope>
</reference>
<organism>
    <name type="scientific">Mus musculus</name>
    <name type="common">Mouse</name>
    <dbReference type="NCBI Taxonomy" id="10090"/>
    <lineage>
        <taxon>Eukaryota</taxon>
        <taxon>Metazoa</taxon>
        <taxon>Chordata</taxon>
        <taxon>Craniata</taxon>
        <taxon>Vertebrata</taxon>
        <taxon>Euteleostomi</taxon>
        <taxon>Mammalia</taxon>
        <taxon>Eutheria</taxon>
        <taxon>Euarchontoglires</taxon>
        <taxon>Glires</taxon>
        <taxon>Rodentia</taxon>
        <taxon>Myomorpha</taxon>
        <taxon>Muroidea</taxon>
        <taxon>Muridae</taxon>
        <taxon>Murinae</taxon>
        <taxon>Mus</taxon>
        <taxon>Mus</taxon>
    </lineage>
</organism>
<evidence type="ECO:0000250" key="1"/>
<evidence type="ECO:0000255" key="2"/>
<evidence type="ECO:0000269" key="3">
    <source>
    </source>
</evidence>
<evidence type="ECO:0000305" key="4"/>
<gene>
    <name type="primary">Ift70b</name>
    <name type="synonym">Ttc30b</name>
</gene>
<name>IT70B_MOUSE</name>
<feature type="chain" id="PRO_0000333204" description="Intraflagellar transport protein 70B">
    <location>
        <begin position="1"/>
        <end position="664"/>
    </location>
</feature>
<feature type="repeat" description="TPR 1">
    <location>
        <begin position="11"/>
        <end position="44"/>
    </location>
</feature>
<feature type="repeat" description="TPR 2">
    <location>
        <begin position="45"/>
        <end position="78"/>
    </location>
</feature>
<feature type="repeat" description="TPR 3">
    <location>
        <begin position="153"/>
        <end position="186"/>
    </location>
</feature>
<feature type="repeat" description="TPR 4">
    <location>
        <begin position="188"/>
        <end position="220"/>
    </location>
</feature>
<feature type="repeat" description="TPR 5">
    <location>
        <begin position="385"/>
        <end position="418"/>
    </location>
</feature>
<feature type="repeat" description="TPR 6">
    <location>
        <begin position="423"/>
        <end position="456"/>
    </location>
</feature>
<feature type="repeat" description="TPR 7">
    <location>
        <begin position="458"/>
        <end position="491"/>
    </location>
</feature>
<feature type="repeat" description="TPR 8">
    <location>
        <begin position="543"/>
        <end position="576"/>
    </location>
</feature>
<feature type="coiled-coil region" evidence="2">
    <location>
        <begin position="507"/>
        <end position="534"/>
    </location>
</feature>
<feature type="sequence conflict" description="In Ref. 1; BAE27704." evidence="4" ref="1">
    <original>L</original>
    <variation>P</variation>
    <location>
        <position position="493"/>
    </location>
</feature>
<sequence length="664" mass="76096">MAGLSSSQIPDGEFTAVVYRLIRDSRYSEAVQLLSAELQRSSRSRAGLSLLAYCYYRLQEFELAAECYEQLSQMHPELEQYRLYQAQALYKACLYPEATRVAFLLDNPAYQTRVLRLQAAIKYSEGDLPGARSLVEQLLSGEGVEDSGGESDYDGQINLGCLLYKEGHYEAACSKFLAALQASGYQPDLSYNLALAYYSSRQYAPALKHIADIIERGIRQHPELGVGMTTEGIDVRSVGNTIVLHQTALVEAFNLKAAIEYQLRNYEAAQEALTDMPPRAEEELDPVTLHNQALMNMDAKPTEGFEKLQFLLQQNPFPPETFGNLLLLYCKYEYFDLAADVLAENAHLTYKFLTPYLYDFLDAMITCQTAPEEAFIKLDGLAGMLTEQLRKLTIQVQDSRHSRDDESAKKAVNEYDETLEKYIPVLMAQAKIYWNFENYPMVEKIFRKSVEFCNDHDVWKLNVAHVLFMQENKYKEAIGFYEPIVKKNYDNILSVSAIVLANLCVSYIMTSQNEEAEELMRKIEKEEEQLSYGDPDKKIYHLCIVNLVIGTLYCAKGNYDFGISRVIKSLEPYHKKLGTDTWYYAKRCFLSLLENMSKHTIMLRDSVIQECVQFLEHCELYGRNIPAVIEQPLEEERMHTGKNTVTYESRKLRALIYEIIGWNV</sequence>
<protein>
    <recommendedName>
        <fullName>Intraflagellar transport protein 70B</fullName>
    </recommendedName>
    <alternativeName>
        <fullName>Tetratricopeptide repeat protein 30B</fullName>
        <shortName>TPR repeat protein 30B</shortName>
    </alternativeName>
</protein>
<proteinExistence type="evidence at protein level"/>
<accession>Q9CY00</accession>
<accession>Q3UI02</accession>